<comment type="function">
    <text evidence="1">Catalyzes the condensation of pantoate with beta-alanine in an ATP-dependent reaction via a pantoyl-adenylate intermediate.</text>
</comment>
<comment type="catalytic activity">
    <reaction evidence="1">
        <text>(R)-pantoate + beta-alanine + ATP = (R)-pantothenate + AMP + diphosphate + H(+)</text>
        <dbReference type="Rhea" id="RHEA:10912"/>
        <dbReference type="ChEBI" id="CHEBI:15378"/>
        <dbReference type="ChEBI" id="CHEBI:15980"/>
        <dbReference type="ChEBI" id="CHEBI:29032"/>
        <dbReference type="ChEBI" id="CHEBI:30616"/>
        <dbReference type="ChEBI" id="CHEBI:33019"/>
        <dbReference type="ChEBI" id="CHEBI:57966"/>
        <dbReference type="ChEBI" id="CHEBI:456215"/>
        <dbReference type="EC" id="6.3.2.1"/>
    </reaction>
</comment>
<comment type="pathway">
    <text evidence="1">Cofactor biosynthesis; (R)-pantothenate biosynthesis; (R)-pantothenate from (R)-pantoate and beta-alanine: step 1/1.</text>
</comment>
<comment type="subunit">
    <text evidence="1">Homodimer.</text>
</comment>
<comment type="subcellular location">
    <subcellularLocation>
        <location evidence="1">Cytoplasm</location>
    </subcellularLocation>
</comment>
<comment type="miscellaneous">
    <text evidence="1">The reaction proceeds by a bi uni uni bi ping pong mechanism.</text>
</comment>
<comment type="similarity">
    <text evidence="1">Belongs to the pantothenate synthetase family.</text>
</comment>
<name>PANC_COXB2</name>
<organism>
    <name type="scientific">Coxiella burnetii (strain CbuG_Q212)</name>
    <name type="common">Coxiella burnetii (strain Q212)</name>
    <dbReference type="NCBI Taxonomy" id="434923"/>
    <lineage>
        <taxon>Bacteria</taxon>
        <taxon>Pseudomonadati</taxon>
        <taxon>Pseudomonadota</taxon>
        <taxon>Gammaproteobacteria</taxon>
        <taxon>Legionellales</taxon>
        <taxon>Coxiellaceae</taxon>
        <taxon>Coxiella</taxon>
    </lineage>
</organism>
<evidence type="ECO:0000255" key="1">
    <source>
        <dbReference type="HAMAP-Rule" id="MF_00158"/>
    </source>
</evidence>
<dbReference type="EC" id="6.3.2.1" evidence="1"/>
<dbReference type="EMBL" id="CP001019">
    <property type="protein sequence ID" value="ACJ18882.1"/>
    <property type="molecule type" value="Genomic_DNA"/>
</dbReference>
<dbReference type="RefSeq" id="WP_005771941.1">
    <property type="nucleotide sequence ID" value="NC_011527.1"/>
</dbReference>
<dbReference type="SMR" id="B6J1Q4"/>
<dbReference type="KEGG" id="cbg:CbuG_1589"/>
<dbReference type="HOGENOM" id="CLU_047148_0_0_6"/>
<dbReference type="UniPathway" id="UPA00028">
    <property type="reaction ID" value="UER00005"/>
</dbReference>
<dbReference type="GO" id="GO:0005829">
    <property type="term" value="C:cytosol"/>
    <property type="evidence" value="ECO:0007669"/>
    <property type="project" value="TreeGrafter"/>
</dbReference>
<dbReference type="GO" id="GO:0005524">
    <property type="term" value="F:ATP binding"/>
    <property type="evidence" value="ECO:0007669"/>
    <property type="project" value="UniProtKB-KW"/>
</dbReference>
<dbReference type="GO" id="GO:0004592">
    <property type="term" value="F:pantoate-beta-alanine ligase activity"/>
    <property type="evidence" value="ECO:0007669"/>
    <property type="project" value="UniProtKB-UniRule"/>
</dbReference>
<dbReference type="GO" id="GO:0015940">
    <property type="term" value="P:pantothenate biosynthetic process"/>
    <property type="evidence" value="ECO:0007669"/>
    <property type="project" value="UniProtKB-UniRule"/>
</dbReference>
<dbReference type="Gene3D" id="3.40.50.620">
    <property type="entry name" value="HUPs"/>
    <property type="match status" value="1"/>
</dbReference>
<dbReference type="Gene3D" id="3.30.1300.10">
    <property type="entry name" value="Pantoate-beta-alanine ligase, C-terminal domain"/>
    <property type="match status" value="1"/>
</dbReference>
<dbReference type="HAMAP" id="MF_00158">
    <property type="entry name" value="PanC"/>
    <property type="match status" value="1"/>
</dbReference>
<dbReference type="InterPro" id="IPR003721">
    <property type="entry name" value="Pantoate_ligase"/>
</dbReference>
<dbReference type="InterPro" id="IPR042176">
    <property type="entry name" value="Pantoate_ligase_C"/>
</dbReference>
<dbReference type="InterPro" id="IPR014729">
    <property type="entry name" value="Rossmann-like_a/b/a_fold"/>
</dbReference>
<dbReference type="NCBIfam" id="TIGR00018">
    <property type="entry name" value="panC"/>
    <property type="match status" value="1"/>
</dbReference>
<dbReference type="PANTHER" id="PTHR21299">
    <property type="entry name" value="CYTIDYLATE KINASE/PANTOATE-BETA-ALANINE LIGASE"/>
    <property type="match status" value="1"/>
</dbReference>
<dbReference type="PANTHER" id="PTHR21299:SF1">
    <property type="entry name" value="PANTOATE--BETA-ALANINE LIGASE"/>
    <property type="match status" value="1"/>
</dbReference>
<dbReference type="Pfam" id="PF02569">
    <property type="entry name" value="Pantoate_ligase"/>
    <property type="match status" value="1"/>
</dbReference>
<dbReference type="SUPFAM" id="SSF52374">
    <property type="entry name" value="Nucleotidylyl transferase"/>
    <property type="match status" value="1"/>
</dbReference>
<reference key="1">
    <citation type="journal article" date="2009" name="Infect. Immun.">
        <title>Comparative genomics reveal extensive transposon-mediated genomic plasticity and diversity among potential effector proteins within the genus Coxiella.</title>
        <authorList>
            <person name="Beare P.A."/>
            <person name="Unsworth N."/>
            <person name="Andoh M."/>
            <person name="Voth D.E."/>
            <person name="Omsland A."/>
            <person name="Gilk S.D."/>
            <person name="Williams K.P."/>
            <person name="Sobral B.W."/>
            <person name="Kupko J.J. III"/>
            <person name="Porcella S.F."/>
            <person name="Samuel J.E."/>
            <person name="Heinzen R.A."/>
        </authorList>
    </citation>
    <scope>NUCLEOTIDE SEQUENCE [LARGE SCALE GENOMIC DNA]</scope>
    <source>
        <strain>CbuG_Q212</strain>
    </source>
</reference>
<sequence>MTKVIEALSDWQSIRKTINDLSVGFVPTMGNLHAGHLSLLERSKCENTITVLSLFINPTQFNDKNDFKNYPRTLAQDIAMAEENGIDYVLAPTDDALYPDQYAYKITNSTINNQEAEFRPRHFDGVLTVVMKLLLLVKPTRAYFGEKDYQQLQLVKGLAEAFFLDTEIIGCKIVRNEFGLPLSSRNRRLTEDQYQLAQRFSEIFHSDLSCDEIKNALIQEGIIVDYIEDYNERRFAAVHVGDIRLIDNIPFAKDKKC</sequence>
<gene>
    <name evidence="1" type="primary">panC</name>
    <name type="ordered locus">CbuG_1589</name>
</gene>
<accession>B6J1Q4</accession>
<protein>
    <recommendedName>
        <fullName evidence="1">Pantothenate synthetase</fullName>
        <shortName evidence="1">PS</shortName>
        <ecNumber evidence="1">6.3.2.1</ecNumber>
    </recommendedName>
    <alternativeName>
        <fullName evidence="1">Pantoate--beta-alanine ligase</fullName>
    </alternativeName>
    <alternativeName>
        <fullName evidence="1">Pantoate-activating enzyme</fullName>
    </alternativeName>
</protein>
<keyword id="KW-0067">ATP-binding</keyword>
<keyword id="KW-0963">Cytoplasm</keyword>
<keyword id="KW-0436">Ligase</keyword>
<keyword id="KW-0547">Nucleotide-binding</keyword>
<keyword id="KW-0566">Pantothenate biosynthesis</keyword>
<proteinExistence type="inferred from homology"/>
<feature type="chain" id="PRO_1000097054" description="Pantothenate synthetase">
    <location>
        <begin position="1"/>
        <end position="257"/>
    </location>
</feature>
<feature type="active site" description="Proton donor" evidence="1">
    <location>
        <position position="36"/>
    </location>
</feature>
<feature type="binding site" evidence="1">
    <location>
        <begin position="29"/>
        <end position="36"/>
    </location>
    <ligand>
        <name>ATP</name>
        <dbReference type="ChEBI" id="CHEBI:30616"/>
    </ligand>
</feature>
<feature type="binding site" evidence="1">
    <location>
        <position position="60"/>
    </location>
    <ligand>
        <name>(R)-pantoate</name>
        <dbReference type="ChEBI" id="CHEBI:15980"/>
    </ligand>
</feature>
<feature type="binding site" evidence="1">
    <location>
        <position position="60"/>
    </location>
    <ligand>
        <name>beta-alanine</name>
        <dbReference type="ChEBI" id="CHEBI:57966"/>
    </ligand>
</feature>
<feature type="binding site" evidence="1">
    <location>
        <begin position="145"/>
        <end position="148"/>
    </location>
    <ligand>
        <name>ATP</name>
        <dbReference type="ChEBI" id="CHEBI:30616"/>
    </ligand>
</feature>
<feature type="binding site" evidence="1">
    <location>
        <position position="151"/>
    </location>
    <ligand>
        <name>(R)-pantoate</name>
        <dbReference type="ChEBI" id="CHEBI:15980"/>
    </ligand>
</feature>
<feature type="binding site" evidence="1">
    <location>
        <position position="174"/>
    </location>
    <ligand>
        <name>ATP</name>
        <dbReference type="ChEBI" id="CHEBI:30616"/>
    </ligand>
</feature>
<feature type="binding site" evidence="1">
    <location>
        <begin position="182"/>
        <end position="185"/>
    </location>
    <ligand>
        <name>ATP</name>
        <dbReference type="ChEBI" id="CHEBI:30616"/>
    </ligand>
</feature>